<organism>
    <name type="scientific">Salmonella paratyphi B (strain ATCC BAA-1250 / SPB7)</name>
    <dbReference type="NCBI Taxonomy" id="1016998"/>
    <lineage>
        <taxon>Bacteria</taxon>
        <taxon>Pseudomonadati</taxon>
        <taxon>Pseudomonadota</taxon>
        <taxon>Gammaproteobacteria</taxon>
        <taxon>Enterobacterales</taxon>
        <taxon>Enterobacteriaceae</taxon>
        <taxon>Salmonella</taxon>
    </lineage>
</organism>
<comment type="subcellular location">
    <subcellularLocation>
        <location evidence="1">Cell membrane</location>
        <topology evidence="1">Multi-pass membrane protein</topology>
    </subcellularLocation>
</comment>
<comment type="similarity">
    <text evidence="1">Belongs to the AaeX family.</text>
</comment>
<name>AAEX_SALPB</name>
<protein>
    <recommendedName>
        <fullName evidence="1">Protein AaeX</fullName>
    </recommendedName>
</protein>
<reference key="1">
    <citation type="submission" date="2007-11" db="EMBL/GenBank/DDBJ databases">
        <authorList>
            <consortium name="The Salmonella enterica serovar Paratyphi B Genome Sequencing Project"/>
            <person name="McClelland M."/>
            <person name="Sanderson E.K."/>
            <person name="Porwollik S."/>
            <person name="Spieth J."/>
            <person name="Clifton W.S."/>
            <person name="Fulton R."/>
            <person name="Cordes M."/>
            <person name="Wollam A."/>
            <person name="Shah N."/>
            <person name="Pepin K."/>
            <person name="Bhonagiri V."/>
            <person name="Nash W."/>
            <person name="Johnson M."/>
            <person name="Thiruvilangam P."/>
            <person name="Wilson R."/>
        </authorList>
    </citation>
    <scope>NUCLEOTIDE SEQUENCE [LARGE SCALE GENOMIC DNA]</scope>
    <source>
        <strain>ATCC BAA-1250 / SPB7</strain>
    </source>
</reference>
<dbReference type="EMBL" id="CP000886">
    <property type="protein sequence ID" value="ABX69517.1"/>
    <property type="molecule type" value="Genomic_DNA"/>
</dbReference>
<dbReference type="RefSeq" id="WP_000051840.1">
    <property type="nucleotide sequence ID" value="NC_010102.1"/>
</dbReference>
<dbReference type="SMR" id="A9N864"/>
<dbReference type="GeneID" id="45138179"/>
<dbReference type="KEGG" id="spq:SPAB_04194"/>
<dbReference type="PATRIC" id="fig|1016998.12.peg.3949"/>
<dbReference type="HOGENOM" id="CLU_188292_0_0_6"/>
<dbReference type="BioCyc" id="SENT1016998:SPAB_RS17055-MONOMER"/>
<dbReference type="Proteomes" id="UP000008556">
    <property type="component" value="Chromosome"/>
</dbReference>
<dbReference type="GO" id="GO:0005886">
    <property type="term" value="C:plasma membrane"/>
    <property type="evidence" value="ECO:0007669"/>
    <property type="project" value="UniProtKB-SubCell"/>
</dbReference>
<dbReference type="HAMAP" id="MF_01546">
    <property type="entry name" value="AaeX"/>
    <property type="match status" value="1"/>
</dbReference>
<dbReference type="InterPro" id="IPR012451">
    <property type="entry name" value="DUF1656"/>
</dbReference>
<dbReference type="NCBIfam" id="NF008615">
    <property type="entry name" value="PRK11594.1"/>
    <property type="match status" value="1"/>
</dbReference>
<dbReference type="Pfam" id="PF07869">
    <property type="entry name" value="DUF1656"/>
    <property type="match status" value="1"/>
</dbReference>
<gene>
    <name evidence="1" type="primary">aaeX</name>
    <name type="ordered locus">SPAB_04194</name>
</gene>
<feature type="chain" id="PRO_1000087669" description="Protein AaeX">
    <location>
        <begin position="1"/>
        <end position="67"/>
    </location>
</feature>
<feature type="transmembrane region" description="Helical" evidence="1">
    <location>
        <begin position="3"/>
        <end position="23"/>
    </location>
</feature>
<feature type="transmembrane region" description="Helical" evidence="1">
    <location>
        <begin position="43"/>
        <end position="63"/>
    </location>
</feature>
<accession>A9N864</accession>
<keyword id="KW-1003">Cell membrane</keyword>
<keyword id="KW-0472">Membrane</keyword>
<keyword id="KW-0812">Transmembrane</keyword>
<keyword id="KW-1133">Transmembrane helix</keyword>
<sequence length="67" mass="7879">MSLFPVIVVFGLSFPPIFFELLLSLAIFWLVRRMLVPTGIYDFVWHPALFNTALYCCLFYLISRLFV</sequence>
<proteinExistence type="inferred from homology"/>
<evidence type="ECO:0000255" key="1">
    <source>
        <dbReference type="HAMAP-Rule" id="MF_01546"/>
    </source>
</evidence>